<sequence>METLLGLLILWLQLQWVSSKQEVTQIPAALSVPEGENLVLNCSFTDSAIYNLQWFRQDPGKGLTSLLLIQSSQREQTSGRLNASLDKSSGRSTLYIAASQPGDSATYLCAVR</sequence>
<feature type="signal peptide" evidence="1">
    <location>
        <begin position="1"/>
        <end position="19"/>
    </location>
</feature>
<feature type="chain" id="PRO_5002107034" description="T cell receptor alpha variable 21" evidence="1">
    <location>
        <begin position="20"/>
        <end position="112"/>
    </location>
</feature>
<feature type="domain" description="Ig-like" evidence="2">
    <location>
        <begin position="21"/>
        <end position="112" status="greater than"/>
    </location>
</feature>
<feature type="glycosylation site" description="N-linked (GlcNAc...) asparagine" evidence="1">
    <location>
        <position position="41"/>
    </location>
</feature>
<feature type="glycosylation site" description="N-linked (GlcNAc...) asparagine" evidence="1">
    <location>
        <position position="82"/>
    </location>
</feature>
<feature type="disulfide bond" evidence="2 3 4 5 13 14 15 16 17 18 19 20">
    <location>
        <begin position="42"/>
        <end position="109"/>
    </location>
</feature>
<feature type="non-terminal residue">
    <location>
        <position position="112"/>
    </location>
</feature>
<feature type="strand" evidence="21">
    <location>
        <begin position="23"/>
        <end position="26"/>
    </location>
</feature>
<feature type="strand" evidence="21">
    <location>
        <begin position="28"/>
        <end position="33"/>
    </location>
</feature>
<feature type="strand" evidence="21">
    <location>
        <begin position="38"/>
        <end position="45"/>
    </location>
</feature>
<feature type="strand" evidence="21">
    <location>
        <begin position="49"/>
        <end position="57"/>
    </location>
</feature>
<feature type="strand" evidence="22">
    <location>
        <begin position="59"/>
        <end position="61"/>
    </location>
</feature>
<feature type="strand" evidence="21">
    <location>
        <begin position="64"/>
        <end position="72"/>
    </location>
</feature>
<feature type="strand" evidence="21">
    <location>
        <begin position="74"/>
        <end position="78"/>
    </location>
</feature>
<feature type="strand" evidence="21">
    <location>
        <begin position="81"/>
        <end position="86"/>
    </location>
</feature>
<feature type="turn" evidence="21">
    <location>
        <begin position="87"/>
        <end position="90"/>
    </location>
</feature>
<feature type="strand" evidence="21">
    <location>
        <begin position="91"/>
        <end position="96"/>
    </location>
</feature>
<feature type="helix" evidence="21">
    <location>
        <begin position="101"/>
        <end position="103"/>
    </location>
</feature>
<feature type="strand" evidence="21">
    <location>
        <begin position="105"/>
        <end position="110"/>
    </location>
</feature>
<accession>A0A0B4J279</accession>
<proteinExistence type="evidence at protein level"/>
<comment type="function">
    <text evidence="6 8 9 10">V region of the variable domain of T cell receptor (TR) alpha chain that participates in the antigen recognition (PubMed:24600447). Alpha-beta T cell receptors are antigen specific receptors which are essential to the immune response and are present on the cell surface of T lymphocytes. Recognize peptide-major histocompatibility (MH) (pMH) complexes that are displayed by antigen presenting cells (APC), a prerequisite for efficient T cell adaptive immunity against pathogens (PubMed:25493333). Binding of alpha-beta TR to pMH complex initiates TR-CD3 clustering on the cell surface and intracellular activation of LCK that phosphorylates the ITAM motifs of CD3G, CD3D, CD3E and CD247 enabling the recruitment of ZAP70. In turn ZAP70 phosphorylates LAT, which recruits numerous signaling molecules to form the LAT signalosome. The LAT signalosome propagates signal branching to three major signaling pathways, the calcium, the mitogen-activated protein kinase (MAPK) kinase and the nuclear factor NF-kappa-B (NF-kB) pathways, leading to the mobilization of transcription factors that are critical for gene expression and essential for T cell growth and differentiation (PubMed:23524462). The T cell repertoire is generated in the thymus, by V-(D)-J rearrangement. This repertoire is then shaped by intrathymic selection events to generate a peripheral T cell pool of self-MH restricted, non-autoaggressive T cells. Post-thymic interaction of alpha-beta TR with the pMH complexes shapes TR structural and functional avidity (PubMed:15040585).</text>
</comment>
<comment type="subunit">
    <text evidence="7">Alpha-beta TR is a heterodimer composed of an alpha and beta chain; disulfide-linked. The alpha-beta TR is associated with the transmembrane signaling CD3 coreceptor proteins to form the TR-CD3 (TcR or TCR). The assembly of alpha-beta TR heterodimers with CD3 occurs in the endoplasmic reticulum where a single alpha-beta TR heterodimer associates with one CD3D-CD3E heterodimer, one CD3G-CD3E heterodimer and one CD247 homodimer forming a stable octameric structure. CD3D-CD3E and CD3G-CD3E heterodimers preferentially associate with TR alpha and TR beta chains, respectively. The association of the CD247 homodimer is the last step of TcR assembly in the endoplasmic reticulum and is required for transport to the cell surface.</text>
</comment>
<comment type="subcellular location">
    <subcellularLocation>
        <location evidence="7">Cell membrane</location>
    </subcellularLocation>
</comment>
<comment type="polymorphism">
    <text evidence="12">There are several alleles. The sequence shown is that of IMGT allele TRAV21*01.</text>
</comment>
<dbReference type="EMBL" id="AC245505">
    <property type="status" value="NOT_ANNOTATED_CDS"/>
    <property type="molecule type" value="Genomic_DNA"/>
</dbReference>
<dbReference type="PDB" id="2BNQ">
    <property type="method" value="X-ray"/>
    <property type="resolution" value="1.70 A"/>
    <property type="chains" value="D=21-112"/>
</dbReference>
<dbReference type="PDB" id="2BNR">
    <property type="method" value="X-ray"/>
    <property type="resolution" value="1.90 A"/>
    <property type="chains" value="D=21-112"/>
</dbReference>
<dbReference type="PDB" id="2BNU">
    <property type="method" value="X-ray"/>
    <property type="resolution" value="1.40 A"/>
    <property type="chains" value="A=21-112"/>
</dbReference>
<dbReference type="PDB" id="4WW1">
    <property type="method" value="X-ray"/>
    <property type="resolution" value="1.38 A"/>
    <property type="chains" value="A=20-110"/>
</dbReference>
<dbReference type="PDB" id="4WW2">
    <property type="method" value="X-ray"/>
    <property type="resolution" value="2.48 A"/>
    <property type="chains" value="A=20-110"/>
</dbReference>
<dbReference type="PDB" id="5BRZ">
    <property type="method" value="X-ray"/>
    <property type="resolution" value="2.62 A"/>
    <property type="chains" value="D=21-112"/>
</dbReference>
<dbReference type="PDB" id="5BS0">
    <property type="method" value="X-ray"/>
    <property type="resolution" value="2.40 A"/>
    <property type="chains" value="D=21-112"/>
</dbReference>
<dbReference type="PDB" id="5EU6">
    <property type="method" value="X-ray"/>
    <property type="resolution" value="2.02 A"/>
    <property type="chains" value="D=20-111"/>
</dbReference>
<dbReference type="PDB" id="6Q3S">
    <property type="method" value="X-ray"/>
    <property type="resolution" value="2.50 A"/>
    <property type="chains" value="D=21-112"/>
</dbReference>
<dbReference type="PDBsum" id="2BNQ"/>
<dbReference type="PDBsum" id="2BNR"/>
<dbReference type="PDBsum" id="2BNU"/>
<dbReference type="PDBsum" id="4WW1"/>
<dbReference type="PDBsum" id="4WW2"/>
<dbReference type="PDBsum" id="5BRZ"/>
<dbReference type="PDBsum" id="5BS0"/>
<dbReference type="PDBsum" id="5EU6"/>
<dbReference type="PDBsum" id="6Q3S"/>
<dbReference type="SMR" id="A0A0B4J279"/>
<dbReference type="FunCoup" id="A0A0B4J279">
    <property type="interactions" value="353"/>
</dbReference>
<dbReference type="IMGT_GENE-DB" id="TRAV21"/>
<dbReference type="GlyCosmos" id="A0A0B4J279">
    <property type="glycosylation" value="2 sites, No reported glycans"/>
</dbReference>
<dbReference type="GlyGen" id="A0A0B4J279">
    <property type="glycosylation" value="2 sites"/>
</dbReference>
<dbReference type="BioMuta" id="TRAV21"/>
<dbReference type="MassIVE" id="A0A0B4J279"/>
<dbReference type="Ensembl" id="ENST00000390449.3">
    <property type="protein sequence ID" value="ENSP00000452526.1"/>
    <property type="gene ID" value="ENSG00000211801.3"/>
</dbReference>
<dbReference type="AGR" id="HGNC:12118"/>
<dbReference type="GeneCards" id="TRAV21"/>
<dbReference type="HGNC" id="HGNC:12118">
    <property type="gene designation" value="TRAV21"/>
</dbReference>
<dbReference type="HPA" id="ENSG00000211801">
    <property type="expression patterns" value="Tissue enriched (lymphoid)"/>
</dbReference>
<dbReference type="neXtProt" id="NX_A0A0B4J279"/>
<dbReference type="OpenTargets" id="ENSG00000211801"/>
<dbReference type="VEuPathDB" id="HostDB:ENSG00000211801"/>
<dbReference type="GeneTree" id="ENSGT00940000163708"/>
<dbReference type="HOGENOM" id="CLU_077975_8_3_1"/>
<dbReference type="InParanoid" id="A0A0B4J279"/>
<dbReference type="OMA" id="QWVSSKQ"/>
<dbReference type="OrthoDB" id="8947657at2759"/>
<dbReference type="PAN-GO" id="A0A0B4J279">
    <property type="GO annotations" value="1 GO annotation based on evolutionary models"/>
</dbReference>
<dbReference type="PhylomeDB" id="A0A0B4J279"/>
<dbReference type="PathwayCommons" id="A0A0B4J279"/>
<dbReference type="ChiTaRS" id="TRAV21">
    <property type="organism name" value="human"/>
</dbReference>
<dbReference type="Pharos" id="A0A0B4J279">
    <property type="development level" value="Tdark"/>
</dbReference>
<dbReference type="PRO" id="PR:A0A0B4J279"/>
<dbReference type="Proteomes" id="UP000005640">
    <property type="component" value="Chromosome 14"/>
</dbReference>
<dbReference type="RNAct" id="A0A0B4J279">
    <property type="molecule type" value="protein"/>
</dbReference>
<dbReference type="Bgee" id="ENSG00000211801">
    <property type="expression patterns" value="Expressed in granulocyte and 105 other cell types or tissues"/>
</dbReference>
<dbReference type="GO" id="GO:0042101">
    <property type="term" value="C:T cell receptor complex"/>
    <property type="evidence" value="ECO:0007669"/>
    <property type="project" value="UniProtKB-KW"/>
</dbReference>
<dbReference type="GO" id="GO:0002250">
    <property type="term" value="P:adaptive immune response"/>
    <property type="evidence" value="ECO:0007669"/>
    <property type="project" value="UniProtKB-KW"/>
</dbReference>
<dbReference type="GO" id="GO:0009617">
    <property type="term" value="P:response to bacterium"/>
    <property type="evidence" value="ECO:0000318"/>
    <property type="project" value="GO_Central"/>
</dbReference>
<dbReference type="CDD" id="cd04983">
    <property type="entry name" value="IgV_TCR_alpha"/>
    <property type="match status" value="1"/>
</dbReference>
<dbReference type="Gene3D" id="2.60.40.10">
    <property type="entry name" value="Immunoglobulins"/>
    <property type="match status" value="1"/>
</dbReference>
<dbReference type="InterPro" id="IPR007110">
    <property type="entry name" value="Ig-like_dom"/>
</dbReference>
<dbReference type="InterPro" id="IPR036179">
    <property type="entry name" value="Ig-like_dom_sf"/>
</dbReference>
<dbReference type="InterPro" id="IPR013783">
    <property type="entry name" value="Ig-like_fold"/>
</dbReference>
<dbReference type="InterPro" id="IPR013106">
    <property type="entry name" value="Ig_V-set"/>
</dbReference>
<dbReference type="InterPro" id="IPR051006">
    <property type="entry name" value="TCR_variable_domain"/>
</dbReference>
<dbReference type="PANTHER" id="PTHR19343">
    <property type="entry name" value="T CELL RECEPTOR ALPHA VARIABLE 1-2"/>
    <property type="match status" value="1"/>
</dbReference>
<dbReference type="PANTHER" id="PTHR19343:SF13">
    <property type="entry name" value="T CELL RECEPTOR ALPHA VARIABLE 21"/>
    <property type="match status" value="1"/>
</dbReference>
<dbReference type="Pfam" id="PF07686">
    <property type="entry name" value="V-set"/>
    <property type="match status" value="1"/>
</dbReference>
<dbReference type="SMART" id="SM00406">
    <property type="entry name" value="IGv"/>
    <property type="match status" value="1"/>
</dbReference>
<dbReference type="SUPFAM" id="SSF48726">
    <property type="entry name" value="Immunoglobulin"/>
    <property type="match status" value="1"/>
</dbReference>
<dbReference type="PROSITE" id="PS50835">
    <property type="entry name" value="IG_LIKE"/>
    <property type="match status" value="1"/>
</dbReference>
<organism>
    <name type="scientific">Homo sapiens</name>
    <name type="common">Human</name>
    <dbReference type="NCBI Taxonomy" id="9606"/>
    <lineage>
        <taxon>Eukaryota</taxon>
        <taxon>Metazoa</taxon>
        <taxon>Chordata</taxon>
        <taxon>Craniata</taxon>
        <taxon>Vertebrata</taxon>
        <taxon>Euteleostomi</taxon>
        <taxon>Mammalia</taxon>
        <taxon>Eutheria</taxon>
        <taxon>Euarchontoglires</taxon>
        <taxon>Primates</taxon>
        <taxon>Haplorrhini</taxon>
        <taxon>Catarrhini</taxon>
        <taxon>Hominidae</taxon>
        <taxon>Homo</taxon>
    </lineage>
</organism>
<keyword id="KW-0002">3D-structure</keyword>
<keyword id="KW-1064">Adaptive immunity</keyword>
<keyword id="KW-1003">Cell membrane</keyword>
<keyword id="KW-1015">Disulfide bond</keyword>
<keyword id="KW-0325">Glycoprotein</keyword>
<keyword id="KW-0391">Immunity</keyword>
<keyword id="KW-0393">Immunoglobulin domain</keyword>
<keyword id="KW-0472">Membrane</keyword>
<keyword id="KW-1267">Proteomics identification</keyword>
<keyword id="KW-0675">Receptor</keyword>
<keyword id="KW-1185">Reference proteome</keyword>
<keyword id="KW-0732">Signal</keyword>
<keyword id="KW-1279">T cell receptor</keyword>
<reference key="1">
    <citation type="journal article" date="2003" name="Nature">
        <title>The DNA sequence and analysis of human chromosome 14.</title>
        <authorList>
            <person name="Heilig R."/>
            <person name="Eckenberg R."/>
            <person name="Petit J.-L."/>
            <person name="Fonknechten N."/>
            <person name="Da Silva C."/>
            <person name="Cattolico L."/>
            <person name="Levy M."/>
            <person name="Barbe V."/>
            <person name="De Berardinis V."/>
            <person name="Ureta-Vidal A."/>
            <person name="Pelletier E."/>
            <person name="Vico V."/>
            <person name="Anthouard V."/>
            <person name="Rowen L."/>
            <person name="Madan A."/>
            <person name="Qin S."/>
            <person name="Sun H."/>
            <person name="Du H."/>
            <person name="Pepin K."/>
            <person name="Artiguenave F."/>
            <person name="Robert C."/>
            <person name="Cruaud C."/>
            <person name="Bruels T."/>
            <person name="Jaillon O."/>
            <person name="Friedlander L."/>
            <person name="Samson G."/>
            <person name="Brottier P."/>
            <person name="Cure S."/>
            <person name="Segurens B."/>
            <person name="Aniere F."/>
            <person name="Samain S."/>
            <person name="Crespeau H."/>
            <person name="Abbasi N."/>
            <person name="Aiach N."/>
            <person name="Boscus D."/>
            <person name="Dickhoff R."/>
            <person name="Dors M."/>
            <person name="Dubois I."/>
            <person name="Friedman C."/>
            <person name="Gouyvenoux M."/>
            <person name="James R."/>
            <person name="Madan A."/>
            <person name="Mairey-Estrada B."/>
            <person name="Mangenot S."/>
            <person name="Martins N."/>
            <person name="Menard M."/>
            <person name="Oztas S."/>
            <person name="Ratcliffe A."/>
            <person name="Shaffer T."/>
            <person name="Trask B."/>
            <person name="Vacherie B."/>
            <person name="Bellemere C."/>
            <person name="Belser C."/>
            <person name="Besnard-Gonnet M."/>
            <person name="Bartol-Mavel D."/>
            <person name="Boutard M."/>
            <person name="Briez-Silla S."/>
            <person name="Combette S."/>
            <person name="Dufosse-Laurent V."/>
            <person name="Ferron C."/>
            <person name="Lechaplais C."/>
            <person name="Louesse C."/>
            <person name="Muselet D."/>
            <person name="Magdelenat G."/>
            <person name="Pateau E."/>
            <person name="Petit E."/>
            <person name="Sirvain-Trukniewicz P."/>
            <person name="Trybou A."/>
            <person name="Vega-Czarny N."/>
            <person name="Bataille E."/>
            <person name="Bluet E."/>
            <person name="Bordelais I."/>
            <person name="Dubois M."/>
            <person name="Dumont C."/>
            <person name="Guerin T."/>
            <person name="Haffray S."/>
            <person name="Hammadi R."/>
            <person name="Muanga J."/>
            <person name="Pellouin V."/>
            <person name="Robert D."/>
            <person name="Wunderle E."/>
            <person name="Gauguet G."/>
            <person name="Roy A."/>
            <person name="Sainte-Marthe L."/>
            <person name="Verdier J."/>
            <person name="Verdier-Discala C."/>
            <person name="Hillier L.W."/>
            <person name="Fulton L."/>
            <person name="McPherson J."/>
            <person name="Matsuda F."/>
            <person name="Wilson R."/>
            <person name="Scarpelli C."/>
            <person name="Gyapay G."/>
            <person name="Wincker P."/>
            <person name="Saurin W."/>
            <person name="Quetier F."/>
            <person name="Waterston R."/>
            <person name="Hood L."/>
            <person name="Weissenbach J."/>
        </authorList>
    </citation>
    <scope>NUCLEOTIDE SEQUENCE [LARGE SCALE GENOMIC DNA] (IMGT ALLELE TRAV21*01)</scope>
</reference>
<reference key="2">
    <citation type="book" date="2001" name="The T Cell Receptor FactsBook.">
        <title>The T Cell Receptor FactsBook.</title>
        <editorList>
            <person name="Lefranc M.P."/>
            <person name="Lefranc G."/>
        </editorList>
        <authorList>
            <person name="Lefranc M.P."/>
            <person name="Lefranc G."/>
        </authorList>
    </citation>
    <scope>NOMENCLATURE</scope>
</reference>
<reference key="3">
    <citation type="journal article" date="2004" name="Nat. Rev. Immunol.">
        <title>The many important facets of T-cell repertoire diversity.</title>
        <authorList>
            <person name="Nikolich-Zugich J."/>
            <person name="Slifka M.K."/>
            <person name="Messaoudi I."/>
        </authorList>
    </citation>
    <scope>REVIEW ON T CELL REPERTOIRE DIVERSITY</scope>
</reference>
<reference key="4">
    <citation type="journal article" date="2010" name="Cold Spring Harb. Perspect. Biol.">
        <title>Structural biology of the T-cell receptor: insights into receptor assembly, ligand recognition, and initiation of signaling.</title>
        <authorList>
            <person name="Wucherpfennig K.W."/>
            <person name="Gagnon E."/>
            <person name="Call M.J."/>
            <person name="Huseby E.S."/>
            <person name="Call M.E."/>
        </authorList>
    </citation>
    <scope>REVIEW ON T CELL RECEPTOR-CD3 COMPLEX ASSEMBLY</scope>
    <scope>SUBCELLULAR LOCATION</scope>
</reference>
<reference key="5">
    <citation type="journal article" date="2013" name="Nat. Rev. Immunol.">
        <title>T cell receptor signalling networks: branched, diversified and bounded.</title>
        <authorList>
            <person name="Brownlie R.J."/>
            <person name="Zamoyska R."/>
        </authorList>
    </citation>
    <scope>REVIEW ON T CELL RECEPTOR SIGNALING</scope>
</reference>
<reference key="6">
    <citation type="journal article" date="2014" name="Front. Immunol.">
        <title>Immunoglobulin and T Cell Receptor Genes: IMGT((R)) and the Birth and Rise of Immunoinformatics.</title>
        <authorList>
            <person name="Lefranc M.P."/>
        </authorList>
    </citation>
    <scope>NOMENCLATURE</scope>
</reference>
<reference key="7">
    <citation type="journal article" date="2015" name="Annu. Rev. Immunol.">
        <title>T cell antigen receptor recognition of antigen-presenting molecules.</title>
        <authorList>
            <person name="Rossjohn J."/>
            <person name="Gras S."/>
            <person name="Miles J.J."/>
            <person name="Turner S.J."/>
            <person name="Godfrey D.I."/>
            <person name="McCluskey J."/>
        </authorList>
    </citation>
    <scope>REVIEW ON FUNCTION</scope>
</reference>
<reference evidence="13 14 15" key="8">
    <citation type="journal article" date="2005" name="J. Exp. Med.">
        <title>Structural and kinetic basis for heightened immunogenicity of T cell vaccines.</title>
        <authorList>
            <person name="Chen J.-L."/>
            <person name="Stewart-Jones G."/>
            <person name="Bossi G."/>
            <person name="Lissin N.M."/>
            <person name="Wooldridge L."/>
            <person name="Choi E.M.L."/>
            <person name="Held G."/>
            <person name="Dunbar P.R."/>
            <person name="Esnouf R.M."/>
            <person name="Sami M."/>
            <person name="Boulter J.M."/>
            <person name="Rizkallah P."/>
            <person name="Renner C."/>
            <person name="Sewell A."/>
            <person name="van der Merwe P.A."/>
            <person name="Jakobsen B.K."/>
            <person name="Griffiths G."/>
            <person name="Jones E.Y."/>
            <person name="Cerundolo V."/>
        </authorList>
    </citation>
    <scope>X-RAY CRYSTALLOGRAPHY (1.40 ANGSTROMS) OF 21-112</scope>
    <scope>DISULFIDE BONDS</scope>
</reference>
<reference evidence="16" key="9">
    <citation type="submission" date="2014-11" db="PDB data bank">
        <title>Crystal structure of human TCR Alpha Chain-TRAV21-TRAJ8 and Beta Chain-TRBV7-8.</title>
        <authorList>
            <person name="Le Nours J."/>
            <person name="Praveena T."/>
            <person name="Pellicci D.P."/>
            <person name="Lim R.T."/>
            <person name="Besra G."/>
            <person name="Howell A.R."/>
            <person name="Godfrey D.I."/>
            <person name="Rossjohn J."/>
            <person name="Uldrich A.P."/>
        </authorList>
    </citation>
    <scope>X-RAY CRYSTALLOGRAPHY (1.38 ANGSTROMS) OF 20-110</scope>
    <scope>DISULFIDE BONDS</scope>
</reference>
<reference evidence="17" key="10">
    <citation type="submission" date="2014-11" db="PDB data bank">
        <title>Crystal structure of human TCR Alpha Chain-TRAV21-TRAJ8, Beta Chain-TRBV7-8, Antigen-presenting glycoprotein CD1d, and Beta-2-microglobulin.</title>
        <authorList>
            <person name="Le Nours J."/>
            <person name="Praveena T."/>
            <person name="Pellicci D."/>
            <person name="Gherardin N.A."/>
            <person name="Lim R.T."/>
            <person name="Besra G."/>
            <person name="Keshipeddy S."/>
            <person name="Richardson S.K."/>
            <person name="Howell A.R."/>
            <person name="Gras S."/>
            <person name="Godfrey D.I."/>
            <person name="Rossjohn J."/>
            <person name="Uldrich A.P."/>
        </authorList>
    </citation>
    <scope>X-RAY CRYSTALLOGRAPHY (2.48 ANGSTROMS) OF 20-110</scope>
    <scope>DISULFIDE BONDS</scope>
</reference>
<reference evidence="20" key="11">
    <citation type="journal article" date="2016" name="J. Biol. Chem.">
        <title>A Molecular Switch Abrogates Glycoprotein 100 (gp100) T-cell Receptor (TCR) Targeting of a Human Melanoma Antigen.</title>
        <authorList>
            <person name="Bianchi V."/>
            <person name="Bulek A."/>
            <person name="Fuller A."/>
            <person name="Lloyd A."/>
            <person name="Attaf M."/>
            <person name="Rizkallah P.J."/>
            <person name="Dolton G."/>
            <person name="Sewell A.K."/>
            <person name="Cole D.K."/>
        </authorList>
    </citation>
    <scope>X-RAY CRYSTALLOGRAPHY (2.02 ANGSTROMS) OF 20-111</scope>
    <scope>DISULFIDE BONDS</scope>
</reference>
<reference evidence="18 19" key="12">
    <citation type="journal article" date="2016" name="Sci. Rep.">
        <title>Direct molecular mimicry enables off-target cardiovascular toxicity by an enhanced affinity TCR designed for cancer immunotherapy.</title>
        <authorList>
            <person name="Raman M.C."/>
            <person name="Rizkallah P.J."/>
            <person name="Simmons R."/>
            <person name="Donnellan Z."/>
            <person name="Dukes J."/>
            <person name="Bossi G."/>
            <person name="Le Provost G.S."/>
            <person name="Todorov P."/>
            <person name="Baston E."/>
            <person name="Hickman E."/>
            <person name="Mahon T."/>
            <person name="Hassan N."/>
            <person name="Vuidepot A."/>
            <person name="Sami M."/>
            <person name="Cole D.K."/>
            <person name="Jakobsen B.K."/>
        </authorList>
    </citation>
    <scope>X-RAY CRYSTALLOGRAPHY (2.40 ANGSTROMS) OF 21-112</scope>
    <scope>DISULFIDE BONDS</scope>
</reference>
<evidence type="ECO:0000255" key="1"/>
<evidence type="ECO:0000255" key="2">
    <source>
        <dbReference type="PROSITE-ProRule" id="PRU00114"/>
    </source>
</evidence>
<evidence type="ECO:0000269" key="3">
    <source>
    </source>
</evidence>
<evidence type="ECO:0000269" key="4">
    <source>
    </source>
</evidence>
<evidence type="ECO:0000269" key="5">
    <source>
    </source>
</evidence>
<evidence type="ECO:0000303" key="6">
    <source>
    </source>
</evidence>
<evidence type="ECO:0000303" key="7">
    <source>
    </source>
</evidence>
<evidence type="ECO:0000303" key="8">
    <source>
    </source>
</evidence>
<evidence type="ECO:0000303" key="9">
    <source>
    </source>
</evidence>
<evidence type="ECO:0000303" key="10">
    <source>
    </source>
</evidence>
<evidence type="ECO:0000303" key="11">
    <source ref="2"/>
</evidence>
<evidence type="ECO:0000305" key="12"/>
<evidence type="ECO:0007744" key="13">
    <source>
        <dbReference type="PDB" id="2BNQ"/>
    </source>
</evidence>
<evidence type="ECO:0007744" key="14">
    <source>
        <dbReference type="PDB" id="2BNR"/>
    </source>
</evidence>
<evidence type="ECO:0007744" key="15">
    <source>
        <dbReference type="PDB" id="2BNU"/>
    </source>
</evidence>
<evidence type="ECO:0007744" key="16">
    <source>
        <dbReference type="PDB" id="4WW1"/>
    </source>
</evidence>
<evidence type="ECO:0007744" key="17">
    <source>
        <dbReference type="PDB" id="4WW2"/>
    </source>
</evidence>
<evidence type="ECO:0007744" key="18">
    <source>
        <dbReference type="PDB" id="5BRZ"/>
    </source>
</evidence>
<evidence type="ECO:0007744" key="19">
    <source>
        <dbReference type="PDB" id="5BS0"/>
    </source>
</evidence>
<evidence type="ECO:0007744" key="20">
    <source>
        <dbReference type="PDB" id="5EU6"/>
    </source>
</evidence>
<evidence type="ECO:0007829" key="21">
    <source>
        <dbReference type="PDB" id="4WW1"/>
    </source>
</evidence>
<evidence type="ECO:0007829" key="22">
    <source>
        <dbReference type="PDB" id="4WW2"/>
    </source>
</evidence>
<name>TVA21_HUMAN</name>
<protein>
    <recommendedName>
        <fullName evidence="11">T cell receptor alpha variable 21</fullName>
    </recommendedName>
</protein>
<gene>
    <name evidence="11" type="primary">TRAV21</name>
</gene>